<proteinExistence type="inferred from homology"/>
<keyword id="KW-0028">Amino-acid biosynthesis</keyword>
<keyword id="KW-0479">Metal-binding</keyword>
<keyword id="KW-0486">Methionine biosynthesis</keyword>
<keyword id="KW-0489">Methyltransferase</keyword>
<keyword id="KW-1185">Reference proteome</keyword>
<keyword id="KW-0677">Repeat</keyword>
<keyword id="KW-0808">Transferase</keyword>
<keyword id="KW-0862">Zinc</keyword>
<comment type="function">
    <text evidence="1">Catalyzes the transfer of a methyl group from 5-methyltetrahydrofolate to homocysteine resulting in methionine formation.</text>
</comment>
<comment type="catalytic activity">
    <reaction evidence="1">
        <text>5-methyltetrahydropteroyltri-L-glutamate + L-homocysteine = tetrahydropteroyltri-L-glutamate + L-methionine</text>
        <dbReference type="Rhea" id="RHEA:21196"/>
        <dbReference type="ChEBI" id="CHEBI:57844"/>
        <dbReference type="ChEBI" id="CHEBI:58140"/>
        <dbReference type="ChEBI" id="CHEBI:58199"/>
        <dbReference type="ChEBI" id="CHEBI:58207"/>
        <dbReference type="EC" id="2.1.1.14"/>
    </reaction>
</comment>
<comment type="cofactor">
    <cofactor evidence="1">
        <name>Zn(2+)</name>
        <dbReference type="ChEBI" id="CHEBI:29105"/>
    </cofactor>
    <text evidence="1">Binds 1 zinc ion per subunit.</text>
</comment>
<comment type="pathway">
    <text evidence="1">Amino-acid biosynthesis; L-methionine biosynthesis via de novo pathway; L-methionine from L-homocysteine (MetE route): step 1/1.</text>
</comment>
<comment type="similarity">
    <text evidence="1">Belongs to the vitamin-B12 independent methionine synthase family.</text>
</comment>
<name>METE_PARP8</name>
<dbReference type="EC" id="2.1.1.14" evidence="1"/>
<dbReference type="EMBL" id="CP001044">
    <property type="protein sequence ID" value="ACC74547.1"/>
    <property type="molecule type" value="Genomic_DNA"/>
</dbReference>
<dbReference type="RefSeq" id="WP_012404711.1">
    <property type="nucleotide sequence ID" value="NC_010623.1"/>
</dbReference>
<dbReference type="SMR" id="B2JNZ4"/>
<dbReference type="STRING" id="391038.Bphy_5470"/>
<dbReference type="KEGG" id="bph:Bphy_5470"/>
<dbReference type="eggNOG" id="COG0620">
    <property type="taxonomic scope" value="Bacteria"/>
</dbReference>
<dbReference type="HOGENOM" id="CLU_013175_0_0_4"/>
<dbReference type="OrthoDB" id="244285at2"/>
<dbReference type="UniPathway" id="UPA00051">
    <property type="reaction ID" value="UER00082"/>
</dbReference>
<dbReference type="Proteomes" id="UP000001192">
    <property type="component" value="Chromosome 2"/>
</dbReference>
<dbReference type="GO" id="GO:0003871">
    <property type="term" value="F:5-methyltetrahydropteroyltriglutamate-homocysteine S-methyltransferase activity"/>
    <property type="evidence" value="ECO:0007669"/>
    <property type="project" value="UniProtKB-UniRule"/>
</dbReference>
<dbReference type="GO" id="GO:0008270">
    <property type="term" value="F:zinc ion binding"/>
    <property type="evidence" value="ECO:0007669"/>
    <property type="project" value="InterPro"/>
</dbReference>
<dbReference type="GO" id="GO:0009086">
    <property type="term" value="P:methionine biosynthetic process"/>
    <property type="evidence" value="ECO:0007669"/>
    <property type="project" value="UniProtKB-UniRule"/>
</dbReference>
<dbReference type="GO" id="GO:0032259">
    <property type="term" value="P:methylation"/>
    <property type="evidence" value="ECO:0007669"/>
    <property type="project" value="UniProtKB-KW"/>
</dbReference>
<dbReference type="CDD" id="cd03311">
    <property type="entry name" value="CIMS_C_terminal_like"/>
    <property type="match status" value="1"/>
</dbReference>
<dbReference type="CDD" id="cd03312">
    <property type="entry name" value="CIMS_N_terminal_like"/>
    <property type="match status" value="1"/>
</dbReference>
<dbReference type="FunFam" id="3.20.20.210:FF:000002">
    <property type="entry name" value="5-methyltetrahydropteroyltriglutamate--homocysteine methyltransferase"/>
    <property type="match status" value="1"/>
</dbReference>
<dbReference type="FunFam" id="3.20.20.210:FF:000003">
    <property type="entry name" value="5-methyltetrahydropteroyltriglutamate--homocysteine methyltransferase"/>
    <property type="match status" value="1"/>
</dbReference>
<dbReference type="Gene3D" id="3.20.20.210">
    <property type="match status" value="2"/>
</dbReference>
<dbReference type="HAMAP" id="MF_00172">
    <property type="entry name" value="Meth_synth"/>
    <property type="match status" value="1"/>
</dbReference>
<dbReference type="InterPro" id="IPR013215">
    <property type="entry name" value="Cbl-indep_Met_Synth_N"/>
</dbReference>
<dbReference type="InterPro" id="IPR006276">
    <property type="entry name" value="Cobalamin-indep_Met_synthase"/>
</dbReference>
<dbReference type="InterPro" id="IPR002629">
    <property type="entry name" value="Met_Synth_C/arc"/>
</dbReference>
<dbReference type="InterPro" id="IPR038071">
    <property type="entry name" value="UROD/MetE-like_sf"/>
</dbReference>
<dbReference type="NCBIfam" id="TIGR01371">
    <property type="entry name" value="met_syn_B12ind"/>
    <property type="match status" value="1"/>
</dbReference>
<dbReference type="NCBIfam" id="NF003556">
    <property type="entry name" value="PRK05222.1"/>
    <property type="match status" value="1"/>
</dbReference>
<dbReference type="PANTHER" id="PTHR30519">
    <property type="entry name" value="5-METHYLTETRAHYDROPTEROYLTRIGLUTAMATE--HOMOCYSTEINE METHYLTRANSFERASE"/>
    <property type="match status" value="1"/>
</dbReference>
<dbReference type="Pfam" id="PF08267">
    <property type="entry name" value="Meth_synt_1"/>
    <property type="match status" value="1"/>
</dbReference>
<dbReference type="Pfam" id="PF01717">
    <property type="entry name" value="Meth_synt_2"/>
    <property type="match status" value="1"/>
</dbReference>
<dbReference type="PIRSF" id="PIRSF000382">
    <property type="entry name" value="MeTrfase_B12_ind"/>
    <property type="match status" value="1"/>
</dbReference>
<dbReference type="SUPFAM" id="SSF51726">
    <property type="entry name" value="UROD/MetE-like"/>
    <property type="match status" value="2"/>
</dbReference>
<gene>
    <name evidence="1" type="primary">metE</name>
    <name type="ordered locus">Bphy_5470</name>
</gene>
<sequence length="763" mass="84900">MVTTHNLGFPRIGAHRELKFALEKYWKGESSRAELKAVGAQLRARHWQDQARLDFSPVGDFAFYDQVLDMSFTLGNLPERVRGFHGDALDNAFRVARGRSAHGADDHSACCGGVAAGEMTKWFDTNYHYIVPEFDTNTQFSLDPSRLLEQIKEAHAQGVKAKPVIIGPVTYLWLGKAKDGSDKLTLLPRLLPVYAALLDYFTAQGIDWVQIDEPVLVTELDARWRDAFVPAYDALAARRVRVLLATYFGQLKENLELACQLPVDGLHIDAIHARDEVAQVAAQVPETAVLSVGVINGRNVWKTDLNAALAWLEPLHATLGDRLWIAPSCSLLHSPVDLNSERKLDADIRSWLAFALQKLDELTLLASALNNGRACVEAELLANAKAIESRRASPRVHNAAVKAALARIDASLGQRANAYPARAAKQAAALALPAFPTTTIGSFPQTADIRRARSQFKAGELDYAGYKLAMEREITRAVKEQETLGLDVLVHGEAERNDMVEYFGEQLDGYVFSQFGWVQSYGSRCVKPPILFGDISRPKAMTVEWICYAQAQTAKPMKGMLTGPVTILNWSFVRDDQPRSVSCRQLALAIREEVLDLEKAGVRVIQIDEAALREGLPLRRSQWNEYLQWAVESFRIAANGVQDETQIHTHMCYSEFNDIIASIAEMDADVITIETSRSDMELLDAFDDFHYPNQIGPGVYDIHSPNIPDQAHVVDLMKKAAERIPAERLWVNPDCGLKTRAWEEVIPALKNMVAAARTLRQAV</sequence>
<accession>B2JNZ4</accession>
<protein>
    <recommendedName>
        <fullName evidence="1">5-methyltetrahydropteroyltriglutamate--homocysteine methyltransferase</fullName>
        <ecNumber evidence="1">2.1.1.14</ecNumber>
    </recommendedName>
    <alternativeName>
        <fullName evidence="1">Cobalamin-independent methionine synthase</fullName>
    </alternativeName>
    <alternativeName>
        <fullName evidence="1">Methionine synthase, vitamin-B12 independent isozyme</fullName>
    </alternativeName>
</protein>
<organism>
    <name type="scientific">Paraburkholderia phymatum (strain DSM 17167 / CIP 108236 / LMG 21445 / STM815)</name>
    <name type="common">Burkholderia phymatum</name>
    <dbReference type="NCBI Taxonomy" id="391038"/>
    <lineage>
        <taxon>Bacteria</taxon>
        <taxon>Pseudomonadati</taxon>
        <taxon>Pseudomonadota</taxon>
        <taxon>Betaproteobacteria</taxon>
        <taxon>Burkholderiales</taxon>
        <taxon>Burkholderiaceae</taxon>
        <taxon>Paraburkholderia</taxon>
    </lineage>
</organism>
<reference key="1">
    <citation type="journal article" date="2014" name="Stand. Genomic Sci.">
        <title>Complete genome sequence of Burkholderia phymatum STM815(T), a broad host range and efficient nitrogen-fixing symbiont of Mimosa species.</title>
        <authorList>
            <person name="Moulin L."/>
            <person name="Klonowska A."/>
            <person name="Caroline B."/>
            <person name="Booth K."/>
            <person name="Vriezen J.A."/>
            <person name="Melkonian R."/>
            <person name="James E.K."/>
            <person name="Young J.P."/>
            <person name="Bena G."/>
            <person name="Hauser L."/>
            <person name="Land M."/>
            <person name="Kyrpides N."/>
            <person name="Bruce D."/>
            <person name="Chain P."/>
            <person name="Copeland A."/>
            <person name="Pitluck S."/>
            <person name="Woyke T."/>
            <person name="Lizotte-Waniewski M."/>
            <person name="Bristow J."/>
            <person name="Riley M."/>
        </authorList>
    </citation>
    <scope>NUCLEOTIDE SEQUENCE [LARGE SCALE GENOMIC DNA]</scope>
    <source>
        <strain>DSM 17167 / CIP 108236 / LMG 21445 / STM815</strain>
    </source>
</reference>
<feature type="chain" id="PRO_1000097820" description="5-methyltetrahydropteroyltriglutamate--homocysteine methyltransferase">
    <location>
        <begin position="1"/>
        <end position="763"/>
    </location>
</feature>
<feature type="active site" description="Proton donor" evidence="1">
    <location>
        <position position="703"/>
    </location>
</feature>
<feature type="binding site" evidence="1">
    <location>
        <begin position="16"/>
        <end position="19"/>
    </location>
    <ligand>
        <name>5-methyltetrahydropteroyltri-L-glutamate</name>
        <dbReference type="ChEBI" id="CHEBI:58207"/>
    </ligand>
</feature>
<feature type="binding site" evidence="1">
    <location>
        <position position="121"/>
    </location>
    <ligand>
        <name>5-methyltetrahydropteroyltri-L-glutamate</name>
        <dbReference type="ChEBI" id="CHEBI:58207"/>
    </ligand>
</feature>
<feature type="binding site" evidence="1">
    <location>
        <begin position="440"/>
        <end position="442"/>
    </location>
    <ligand>
        <name>L-homocysteine</name>
        <dbReference type="ChEBI" id="CHEBI:58199"/>
    </ligand>
</feature>
<feature type="binding site" evidence="1">
    <location>
        <begin position="440"/>
        <end position="442"/>
    </location>
    <ligand>
        <name>L-methionine</name>
        <dbReference type="ChEBI" id="CHEBI:57844"/>
    </ligand>
</feature>
<feature type="binding site" evidence="1">
    <location>
        <position position="493"/>
    </location>
    <ligand>
        <name>L-homocysteine</name>
        <dbReference type="ChEBI" id="CHEBI:58199"/>
    </ligand>
</feature>
<feature type="binding site" evidence="1">
    <location>
        <position position="493"/>
    </location>
    <ligand>
        <name>L-methionine</name>
        <dbReference type="ChEBI" id="CHEBI:57844"/>
    </ligand>
</feature>
<feature type="binding site" evidence="1">
    <location>
        <begin position="524"/>
        <end position="525"/>
    </location>
    <ligand>
        <name>5-methyltetrahydropteroyltri-L-glutamate</name>
        <dbReference type="ChEBI" id="CHEBI:58207"/>
    </ligand>
</feature>
<feature type="binding site" evidence="1">
    <location>
        <position position="570"/>
    </location>
    <ligand>
        <name>5-methyltetrahydropteroyltri-L-glutamate</name>
        <dbReference type="ChEBI" id="CHEBI:58207"/>
    </ligand>
</feature>
<feature type="binding site" evidence="1">
    <location>
        <position position="608"/>
    </location>
    <ligand>
        <name>L-homocysteine</name>
        <dbReference type="ChEBI" id="CHEBI:58199"/>
    </ligand>
</feature>
<feature type="binding site" evidence="1">
    <location>
        <position position="608"/>
    </location>
    <ligand>
        <name>L-methionine</name>
        <dbReference type="ChEBI" id="CHEBI:57844"/>
    </ligand>
</feature>
<feature type="binding site" evidence="1">
    <location>
        <position position="614"/>
    </location>
    <ligand>
        <name>5-methyltetrahydropteroyltri-L-glutamate</name>
        <dbReference type="ChEBI" id="CHEBI:58207"/>
    </ligand>
</feature>
<feature type="binding site" evidence="1">
    <location>
        <position position="650"/>
    </location>
    <ligand>
        <name>Zn(2+)</name>
        <dbReference type="ChEBI" id="CHEBI:29105"/>
        <note>catalytic</note>
    </ligand>
</feature>
<feature type="binding site" evidence="1">
    <location>
        <position position="652"/>
    </location>
    <ligand>
        <name>Zn(2+)</name>
        <dbReference type="ChEBI" id="CHEBI:29105"/>
        <note>catalytic</note>
    </ligand>
</feature>
<feature type="binding site" evidence="1">
    <location>
        <position position="674"/>
    </location>
    <ligand>
        <name>Zn(2+)</name>
        <dbReference type="ChEBI" id="CHEBI:29105"/>
        <note>catalytic</note>
    </ligand>
</feature>
<feature type="binding site" evidence="1">
    <location>
        <position position="735"/>
    </location>
    <ligand>
        <name>Zn(2+)</name>
        <dbReference type="ChEBI" id="CHEBI:29105"/>
        <note>catalytic</note>
    </ligand>
</feature>
<evidence type="ECO:0000255" key="1">
    <source>
        <dbReference type="HAMAP-Rule" id="MF_00172"/>
    </source>
</evidence>